<keyword id="KW-0687">Ribonucleoprotein</keyword>
<keyword id="KW-0689">Ribosomal protein</keyword>
<dbReference type="EMBL" id="AP009324">
    <property type="protein sequence ID" value="BAF78207.1"/>
    <property type="molecule type" value="Genomic_DNA"/>
</dbReference>
<dbReference type="SMR" id="A7X1Y9"/>
<dbReference type="KEGG" id="saw:SAHV_1324"/>
<dbReference type="HOGENOM" id="CLU_190949_0_2_9"/>
<dbReference type="GO" id="GO:0005737">
    <property type="term" value="C:cytoplasm"/>
    <property type="evidence" value="ECO:0007669"/>
    <property type="project" value="UniProtKB-ARBA"/>
</dbReference>
<dbReference type="GO" id="GO:1990904">
    <property type="term" value="C:ribonucleoprotein complex"/>
    <property type="evidence" value="ECO:0007669"/>
    <property type="project" value="UniProtKB-KW"/>
</dbReference>
<dbReference type="GO" id="GO:0005840">
    <property type="term" value="C:ribosome"/>
    <property type="evidence" value="ECO:0007669"/>
    <property type="project" value="UniProtKB-KW"/>
</dbReference>
<dbReference type="GO" id="GO:0003735">
    <property type="term" value="F:structural constituent of ribosome"/>
    <property type="evidence" value="ECO:0007669"/>
    <property type="project" value="InterPro"/>
</dbReference>
<dbReference type="GO" id="GO:0006412">
    <property type="term" value="P:translation"/>
    <property type="evidence" value="ECO:0007669"/>
    <property type="project" value="UniProtKB-UniRule"/>
</dbReference>
<dbReference type="Gene3D" id="2.20.28.120">
    <property type="entry name" value="Ribosomal protein L33"/>
    <property type="match status" value="1"/>
</dbReference>
<dbReference type="HAMAP" id="MF_00294">
    <property type="entry name" value="Ribosomal_bL33"/>
    <property type="match status" value="1"/>
</dbReference>
<dbReference type="InterPro" id="IPR001705">
    <property type="entry name" value="Ribosomal_bL33"/>
</dbReference>
<dbReference type="InterPro" id="IPR018264">
    <property type="entry name" value="Ribosomal_bL33_CS"/>
</dbReference>
<dbReference type="InterPro" id="IPR038584">
    <property type="entry name" value="Ribosomal_bL33_sf"/>
</dbReference>
<dbReference type="InterPro" id="IPR011332">
    <property type="entry name" value="Ribosomal_zn-bd"/>
</dbReference>
<dbReference type="NCBIfam" id="NF001764">
    <property type="entry name" value="PRK00504.1"/>
    <property type="match status" value="1"/>
</dbReference>
<dbReference type="NCBIfam" id="NF001860">
    <property type="entry name" value="PRK00595.1"/>
    <property type="match status" value="1"/>
</dbReference>
<dbReference type="NCBIfam" id="TIGR01023">
    <property type="entry name" value="rpmG_bact"/>
    <property type="match status" value="1"/>
</dbReference>
<dbReference type="PANTHER" id="PTHR43168">
    <property type="entry name" value="50S RIBOSOMAL PROTEIN L33, CHLOROPLASTIC"/>
    <property type="match status" value="1"/>
</dbReference>
<dbReference type="PANTHER" id="PTHR43168:SF2">
    <property type="entry name" value="LARGE RIBOSOMAL SUBUNIT PROTEIN BL33C"/>
    <property type="match status" value="1"/>
</dbReference>
<dbReference type="Pfam" id="PF00471">
    <property type="entry name" value="Ribosomal_L33"/>
    <property type="match status" value="1"/>
</dbReference>
<dbReference type="SUPFAM" id="SSF57829">
    <property type="entry name" value="Zn-binding ribosomal proteins"/>
    <property type="match status" value="1"/>
</dbReference>
<dbReference type="PROSITE" id="PS00582">
    <property type="entry name" value="RIBOSOMAL_L33"/>
    <property type="match status" value="1"/>
</dbReference>
<organism>
    <name type="scientific">Staphylococcus aureus (strain Mu3 / ATCC 700698)</name>
    <dbReference type="NCBI Taxonomy" id="418127"/>
    <lineage>
        <taxon>Bacteria</taxon>
        <taxon>Bacillati</taxon>
        <taxon>Bacillota</taxon>
        <taxon>Bacilli</taxon>
        <taxon>Bacillales</taxon>
        <taxon>Staphylococcaceae</taxon>
        <taxon>Staphylococcus</taxon>
    </lineage>
</organism>
<feature type="chain" id="PRO_0000356687" description="Large ribosomal subunit protein bL33A">
    <location>
        <begin position="1"/>
        <end position="49"/>
    </location>
</feature>
<sequence>MRVNVTLACTECGDRNYITTKNKRNNPERIEMKKYCPRLNKYTLHRETK</sequence>
<accession>A7X1Y9</accession>
<reference key="1">
    <citation type="journal article" date="2008" name="Antimicrob. Agents Chemother.">
        <title>Mutated response regulator graR is responsible for phenotypic conversion of Staphylococcus aureus from heterogeneous vancomycin-intermediate resistance to vancomycin-intermediate resistance.</title>
        <authorList>
            <person name="Neoh H.-M."/>
            <person name="Cui L."/>
            <person name="Yuzawa H."/>
            <person name="Takeuchi F."/>
            <person name="Matsuo M."/>
            <person name="Hiramatsu K."/>
        </authorList>
    </citation>
    <scope>NUCLEOTIDE SEQUENCE [LARGE SCALE GENOMIC DNA]</scope>
    <source>
        <strain>Mu3 / ATCC 700698</strain>
    </source>
</reference>
<comment type="similarity">
    <text evidence="1">Belongs to the bacterial ribosomal protein bL33 family.</text>
</comment>
<gene>
    <name evidence="1" type="primary">rpmG1</name>
    <name type="ordered locus">SAHV_1324</name>
</gene>
<proteinExistence type="inferred from homology"/>
<protein>
    <recommendedName>
        <fullName evidence="1">Large ribosomal subunit protein bL33A</fullName>
    </recommendedName>
    <alternativeName>
        <fullName evidence="1">50S ribosomal protein L33 1</fullName>
    </alternativeName>
</protein>
<name>RL331_STAA1</name>
<evidence type="ECO:0000255" key="1">
    <source>
        <dbReference type="HAMAP-Rule" id="MF_00294"/>
    </source>
</evidence>